<keyword id="KW-0963">Cytoplasm</keyword>
<keyword id="KW-0210">Decarboxylase</keyword>
<keyword id="KW-0456">Lyase</keyword>
<keyword id="KW-0627">Porphyrin biosynthesis</keyword>
<keyword id="KW-1185">Reference proteome</keyword>
<dbReference type="EC" id="4.1.1.37" evidence="1"/>
<dbReference type="EMBL" id="AL646052">
    <property type="protein sequence ID" value="CAD17091.1"/>
    <property type="molecule type" value="Genomic_DNA"/>
</dbReference>
<dbReference type="RefSeq" id="WP_011003187.1">
    <property type="nucleotide sequence ID" value="NC_003295.1"/>
</dbReference>
<dbReference type="SMR" id="Q8XU90"/>
<dbReference type="STRING" id="267608.RSc3303"/>
<dbReference type="EnsemblBacteria" id="CAD17091">
    <property type="protein sequence ID" value="CAD17091"/>
    <property type="gene ID" value="RSc3303"/>
</dbReference>
<dbReference type="KEGG" id="rso:RSc3303"/>
<dbReference type="eggNOG" id="COG0407">
    <property type="taxonomic scope" value="Bacteria"/>
</dbReference>
<dbReference type="HOGENOM" id="CLU_040933_0_0_4"/>
<dbReference type="UniPathway" id="UPA00251">
    <property type="reaction ID" value="UER00321"/>
</dbReference>
<dbReference type="Proteomes" id="UP000001436">
    <property type="component" value="Chromosome"/>
</dbReference>
<dbReference type="GO" id="GO:0005829">
    <property type="term" value="C:cytosol"/>
    <property type="evidence" value="ECO:0007669"/>
    <property type="project" value="TreeGrafter"/>
</dbReference>
<dbReference type="GO" id="GO:0004853">
    <property type="term" value="F:uroporphyrinogen decarboxylase activity"/>
    <property type="evidence" value="ECO:0007669"/>
    <property type="project" value="UniProtKB-UniRule"/>
</dbReference>
<dbReference type="GO" id="GO:0019353">
    <property type="term" value="P:protoporphyrinogen IX biosynthetic process from glutamate"/>
    <property type="evidence" value="ECO:0007669"/>
    <property type="project" value="TreeGrafter"/>
</dbReference>
<dbReference type="CDD" id="cd00717">
    <property type="entry name" value="URO-D"/>
    <property type="match status" value="1"/>
</dbReference>
<dbReference type="FunFam" id="3.20.20.210:FF:000001">
    <property type="entry name" value="Uroporphyrinogen decarboxylase"/>
    <property type="match status" value="1"/>
</dbReference>
<dbReference type="Gene3D" id="3.20.20.210">
    <property type="match status" value="1"/>
</dbReference>
<dbReference type="HAMAP" id="MF_00218">
    <property type="entry name" value="URO_D"/>
    <property type="match status" value="1"/>
</dbReference>
<dbReference type="InterPro" id="IPR038071">
    <property type="entry name" value="UROD/MetE-like_sf"/>
</dbReference>
<dbReference type="InterPro" id="IPR006361">
    <property type="entry name" value="Uroporphyrinogen_deCO2ase_HemE"/>
</dbReference>
<dbReference type="InterPro" id="IPR000257">
    <property type="entry name" value="Uroporphyrinogen_deCOase"/>
</dbReference>
<dbReference type="NCBIfam" id="TIGR01464">
    <property type="entry name" value="hemE"/>
    <property type="match status" value="1"/>
</dbReference>
<dbReference type="PANTHER" id="PTHR21091">
    <property type="entry name" value="METHYLTETRAHYDROFOLATE:HOMOCYSTEINE METHYLTRANSFERASE RELATED"/>
    <property type="match status" value="1"/>
</dbReference>
<dbReference type="PANTHER" id="PTHR21091:SF169">
    <property type="entry name" value="UROPORPHYRINOGEN DECARBOXYLASE"/>
    <property type="match status" value="1"/>
</dbReference>
<dbReference type="Pfam" id="PF01208">
    <property type="entry name" value="URO-D"/>
    <property type="match status" value="1"/>
</dbReference>
<dbReference type="SUPFAM" id="SSF51726">
    <property type="entry name" value="UROD/MetE-like"/>
    <property type="match status" value="1"/>
</dbReference>
<dbReference type="PROSITE" id="PS00906">
    <property type="entry name" value="UROD_1"/>
    <property type="match status" value="1"/>
</dbReference>
<dbReference type="PROSITE" id="PS00907">
    <property type="entry name" value="UROD_2"/>
    <property type="match status" value="1"/>
</dbReference>
<comment type="function">
    <text evidence="1">Catalyzes the decarboxylation of four acetate groups of uroporphyrinogen-III to yield coproporphyrinogen-III.</text>
</comment>
<comment type="catalytic activity">
    <reaction evidence="1">
        <text>uroporphyrinogen III + 4 H(+) = coproporphyrinogen III + 4 CO2</text>
        <dbReference type="Rhea" id="RHEA:19865"/>
        <dbReference type="ChEBI" id="CHEBI:15378"/>
        <dbReference type="ChEBI" id="CHEBI:16526"/>
        <dbReference type="ChEBI" id="CHEBI:57308"/>
        <dbReference type="ChEBI" id="CHEBI:57309"/>
        <dbReference type="EC" id="4.1.1.37"/>
    </reaction>
</comment>
<comment type="pathway">
    <text evidence="1">Porphyrin-containing compound metabolism; protoporphyrin-IX biosynthesis; coproporphyrinogen-III from 5-aminolevulinate: step 4/4.</text>
</comment>
<comment type="subunit">
    <text evidence="1">Homodimer.</text>
</comment>
<comment type="subcellular location">
    <subcellularLocation>
        <location evidence="1">Cytoplasm</location>
    </subcellularLocation>
</comment>
<comment type="similarity">
    <text evidence="1">Belongs to the uroporphyrinogen decarboxylase family.</text>
</comment>
<accession>Q8XU90</accession>
<evidence type="ECO:0000255" key="1">
    <source>
        <dbReference type="HAMAP-Rule" id="MF_00218"/>
    </source>
</evidence>
<protein>
    <recommendedName>
        <fullName evidence="1">Uroporphyrinogen decarboxylase</fullName>
        <shortName evidence="1">UPD</shortName>
        <shortName evidence="1">URO-D</shortName>
        <ecNumber evidence="1">4.1.1.37</ecNumber>
    </recommendedName>
</protein>
<feature type="chain" id="PRO_0000187629" description="Uroporphyrinogen decarboxylase">
    <location>
        <begin position="1"/>
        <end position="364"/>
    </location>
</feature>
<feature type="binding site" evidence="1">
    <location>
        <begin position="28"/>
        <end position="32"/>
    </location>
    <ligand>
        <name>substrate</name>
    </ligand>
</feature>
<feature type="binding site" evidence="1">
    <location>
        <position position="47"/>
    </location>
    <ligand>
        <name>substrate</name>
    </ligand>
</feature>
<feature type="binding site" evidence="1">
    <location>
        <position position="78"/>
    </location>
    <ligand>
        <name>substrate</name>
    </ligand>
</feature>
<feature type="binding site" evidence="1">
    <location>
        <position position="158"/>
    </location>
    <ligand>
        <name>substrate</name>
    </ligand>
</feature>
<feature type="binding site" evidence="1">
    <location>
        <position position="213"/>
    </location>
    <ligand>
        <name>substrate</name>
    </ligand>
</feature>
<feature type="binding site" evidence="1">
    <location>
        <position position="334"/>
    </location>
    <ligand>
        <name>substrate</name>
    </ligand>
</feature>
<feature type="site" description="Transition state stabilizer" evidence="1">
    <location>
        <position position="78"/>
    </location>
</feature>
<sequence length="364" mass="39524">MSAPLANDTFLRALRRQPTEYTPLWLMRQAGRYLPEYNATRARAGSFLGLAKSPAYATEVTLQPLDRYPLDAAILFSDILTVPDAMGLGLSFEQGEGPRFARPVRSEADVAALSVPDMASLQYVFDAVSEIRRALVQDGRQRVPLIGFSGSPWTLACYMVEGGGSDDFRTVKSMLYARPDLMHRILEINAAAVIDYLNAQIDAGAQAVMVFDTWGGALADGIYQTFSLAYMARVVEGLRAGADGQRVPVILFTKGGGLWLESMAQTGADALGVDWTVNLQLARVRTGGRVALQGNLDPTVLFAEPDAIRAQVRRVLEDYAAGGDSDGHVFNLGHGISQFTPPESVAVLVDEVHTFSRALRTRLP</sequence>
<reference key="1">
    <citation type="journal article" date="2002" name="Nature">
        <title>Genome sequence of the plant pathogen Ralstonia solanacearum.</title>
        <authorList>
            <person name="Salanoubat M."/>
            <person name="Genin S."/>
            <person name="Artiguenave F."/>
            <person name="Gouzy J."/>
            <person name="Mangenot S."/>
            <person name="Arlat M."/>
            <person name="Billault A."/>
            <person name="Brottier P."/>
            <person name="Camus J.-C."/>
            <person name="Cattolico L."/>
            <person name="Chandler M."/>
            <person name="Choisne N."/>
            <person name="Claudel-Renard C."/>
            <person name="Cunnac S."/>
            <person name="Demange N."/>
            <person name="Gaspin C."/>
            <person name="Lavie M."/>
            <person name="Moisan A."/>
            <person name="Robert C."/>
            <person name="Saurin W."/>
            <person name="Schiex T."/>
            <person name="Siguier P."/>
            <person name="Thebault P."/>
            <person name="Whalen M."/>
            <person name="Wincker P."/>
            <person name="Levy M."/>
            <person name="Weissenbach J."/>
            <person name="Boucher C.A."/>
        </authorList>
    </citation>
    <scope>NUCLEOTIDE SEQUENCE [LARGE SCALE GENOMIC DNA]</scope>
    <source>
        <strain>ATCC BAA-1114 / GMI1000</strain>
    </source>
</reference>
<name>DCUP_RALN1</name>
<proteinExistence type="inferred from homology"/>
<organism>
    <name type="scientific">Ralstonia nicotianae (strain ATCC BAA-1114 / GMI1000)</name>
    <name type="common">Ralstonia solanacearum</name>
    <dbReference type="NCBI Taxonomy" id="267608"/>
    <lineage>
        <taxon>Bacteria</taxon>
        <taxon>Pseudomonadati</taxon>
        <taxon>Pseudomonadota</taxon>
        <taxon>Betaproteobacteria</taxon>
        <taxon>Burkholderiales</taxon>
        <taxon>Burkholderiaceae</taxon>
        <taxon>Ralstonia</taxon>
        <taxon>Ralstonia solanacearum species complex</taxon>
    </lineage>
</organism>
<gene>
    <name evidence="1" type="primary">hemE</name>
    <name type="ordered locus">RSc3303</name>
    <name type="ORF">RS02532</name>
</gene>